<comment type="function">
    <text evidence="1">May have an important role in the development and/or progression of some cancers.</text>
</comment>
<comment type="subunit">
    <text evidence="2">Interacts with NOD2.</text>
</comment>
<comment type="subcellular location">
    <subcellularLocation>
        <location evidence="1">Nucleus</location>
    </subcellularLocation>
</comment>
<comment type="similarity">
    <text evidence="3">Belongs to the LDOC1 family.</text>
</comment>
<comment type="sequence caution" evidence="3">
    <conflict type="frameshift">
        <sequence resource="EMBL-CDS" id="AAI18389"/>
    </conflict>
</comment>
<dbReference type="EMBL" id="BC118388">
    <property type="protein sequence ID" value="AAI18389.1"/>
    <property type="status" value="ALT_FRAME"/>
    <property type="molecule type" value="mRNA"/>
</dbReference>
<dbReference type="RefSeq" id="NP_001075013.1">
    <property type="nucleotide sequence ID" value="NM_001081544.1"/>
</dbReference>
<dbReference type="SMR" id="Q17QF6"/>
<dbReference type="FunCoup" id="Q17QF6">
    <property type="interactions" value="19"/>
</dbReference>
<dbReference type="GeneID" id="616591"/>
<dbReference type="KEGG" id="bta:616591"/>
<dbReference type="CTD" id="23641"/>
<dbReference type="InParanoid" id="Q17QF6"/>
<dbReference type="OrthoDB" id="9827795at2759"/>
<dbReference type="Proteomes" id="UP000009136">
    <property type="component" value="Unplaced"/>
</dbReference>
<dbReference type="GO" id="GO:0005634">
    <property type="term" value="C:nucleus"/>
    <property type="evidence" value="ECO:0007669"/>
    <property type="project" value="UniProtKB-SubCell"/>
</dbReference>
<dbReference type="GO" id="GO:0071222">
    <property type="term" value="P:cellular response to lipopolysaccharide"/>
    <property type="evidence" value="ECO:0000250"/>
    <property type="project" value="UniProtKB"/>
</dbReference>
<dbReference type="GO" id="GO:0071225">
    <property type="term" value="P:cellular response to muramyl dipeptide"/>
    <property type="evidence" value="ECO:0000250"/>
    <property type="project" value="UniProtKB"/>
</dbReference>
<dbReference type="InterPro" id="IPR032549">
    <property type="entry name" value="DUF4939"/>
</dbReference>
<dbReference type="Pfam" id="PF16297">
    <property type="entry name" value="DUF4939"/>
    <property type="match status" value="1"/>
</dbReference>
<organism>
    <name type="scientific">Bos taurus</name>
    <name type="common">Bovine</name>
    <dbReference type="NCBI Taxonomy" id="9913"/>
    <lineage>
        <taxon>Eukaryota</taxon>
        <taxon>Metazoa</taxon>
        <taxon>Chordata</taxon>
        <taxon>Craniata</taxon>
        <taxon>Vertebrata</taxon>
        <taxon>Euteleostomi</taxon>
        <taxon>Mammalia</taxon>
        <taxon>Eutheria</taxon>
        <taxon>Laurasiatheria</taxon>
        <taxon>Artiodactyla</taxon>
        <taxon>Ruminantia</taxon>
        <taxon>Pecora</taxon>
        <taxon>Bovidae</taxon>
        <taxon>Bovinae</taxon>
        <taxon>Bos</taxon>
    </lineage>
</organism>
<name>LDOC1_BOVIN</name>
<keyword id="KW-0539">Nucleus</keyword>
<keyword id="KW-1185">Reference proteome</keyword>
<reference key="1">
    <citation type="submission" date="2006-06" db="EMBL/GenBank/DDBJ databases">
        <authorList>
            <consortium name="NIH - Mammalian Gene Collection (MGC) project"/>
        </authorList>
    </citation>
    <scope>NUCLEOTIDE SEQUENCE [LARGE SCALE MRNA]</scope>
    <source>
        <strain>Hereford</strain>
        <tissue>Fetal cerebellum</tissue>
    </source>
</reference>
<accession>Q17QF6</accession>
<feature type="chain" id="PRO_0000289099" description="Protein LDOC1">
    <location>
        <begin position="1"/>
        <end position="146"/>
    </location>
</feature>
<sequence length="146" mass="17044">MVDELVLLLHALLMRHRALSIENSQLMEQLRLLVCERATLLRQVRPPSCPVPFPETFDGESSRLPEFIVQTASYMLVNENRFCNDAMKVAFLISLLTGEAEEWVVPYIEMDSPILGDYRAFLDKMKQCFGWDDDEEDEDEYEEDDY</sequence>
<proteinExistence type="evidence at transcript level"/>
<gene>
    <name type="primary">LDOC1</name>
</gene>
<protein>
    <recommendedName>
        <fullName>Protein LDOC1</fullName>
    </recommendedName>
</protein>
<evidence type="ECO:0000250" key="1"/>
<evidence type="ECO:0000250" key="2">
    <source>
        <dbReference type="UniProtKB" id="O95751"/>
    </source>
</evidence>
<evidence type="ECO:0000305" key="3"/>